<reference key="1">
    <citation type="journal article" date="1998" name="Nature">
        <title>Deciphering the biology of Mycobacterium tuberculosis from the complete genome sequence.</title>
        <authorList>
            <person name="Cole S.T."/>
            <person name="Brosch R."/>
            <person name="Parkhill J."/>
            <person name="Garnier T."/>
            <person name="Churcher C.M."/>
            <person name="Harris D.E."/>
            <person name="Gordon S.V."/>
            <person name="Eiglmeier K."/>
            <person name="Gas S."/>
            <person name="Barry C.E. III"/>
            <person name="Tekaia F."/>
            <person name="Badcock K."/>
            <person name="Basham D."/>
            <person name="Brown D."/>
            <person name="Chillingworth T."/>
            <person name="Connor R."/>
            <person name="Davies R.M."/>
            <person name="Devlin K."/>
            <person name="Feltwell T."/>
            <person name="Gentles S."/>
            <person name="Hamlin N."/>
            <person name="Holroyd S."/>
            <person name="Hornsby T."/>
            <person name="Jagels K."/>
            <person name="Krogh A."/>
            <person name="McLean J."/>
            <person name="Moule S."/>
            <person name="Murphy L.D."/>
            <person name="Oliver S."/>
            <person name="Osborne J."/>
            <person name="Quail M.A."/>
            <person name="Rajandream M.A."/>
            <person name="Rogers J."/>
            <person name="Rutter S."/>
            <person name="Seeger K."/>
            <person name="Skelton S."/>
            <person name="Squares S."/>
            <person name="Squares R."/>
            <person name="Sulston J.E."/>
            <person name="Taylor K."/>
            <person name="Whitehead S."/>
            <person name="Barrell B.G."/>
        </authorList>
    </citation>
    <scope>NUCLEOTIDE SEQUENCE [LARGE SCALE GENOMIC DNA]</scope>
    <source>
        <strain>ATCC 25618 / H37Rv</strain>
    </source>
</reference>
<reference key="2">
    <citation type="journal article" date="2010" name="J. Biol. Chem.">
        <title>The multifunctional PE_PGRS11 protein from Mycobacterium tuberculosis plays a role in regulating resistance to oxidative stress.</title>
        <authorList>
            <person name="Chaturvedi R."/>
            <person name="Bansal K."/>
            <person name="Narayana Y."/>
            <person name="Kapoor N."/>
            <person name="Sukumar N."/>
            <person name="Togarsimalemath S.K."/>
            <person name="Chandra N."/>
            <person name="Mishra S."/>
            <person name="Ajitkumar P."/>
            <person name="Joshi B."/>
            <person name="Katoch V.M."/>
            <person name="Patil S.A."/>
            <person name="Balaji K.N."/>
        </authorList>
    </citation>
    <scope>FUNCTION</scope>
    <scope>CATALYTIC ACTIVITY</scope>
    <scope>COFACTOR</scope>
    <scope>BIOPHYSICOCHEMICAL PROPERTIES</scope>
    <scope>INTERACTION WITH TLR2</scope>
    <scope>SUBCELLULAR LOCATION</scope>
    <scope>INDUCTION</scope>
    <scope>MUTAGENESIS OF ARG-289 AND HIS-290</scope>
</reference>
<reference key="3">
    <citation type="journal article" date="2010" name="J. Immunol.">
        <title>PE_PGRS antigens of Mycobacterium tuberculosis induce maturation and activation of human dendritic cells.</title>
        <authorList>
            <person name="Bansal K."/>
            <person name="Elluru S.R."/>
            <person name="Narayana Y."/>
            <person name="Chaturvedi R."/>
            <person name="Patil S.A."/>
            <person name="Kaveri S.V."/>
            <person name="Bayry J."/>
            <person name="Balaji K.N."/>
        </authorList>
    </citation>
    <scope>FUNCTION</scope>
    <scope>INTERACTION WITH TLR2</scope>
</reference>
<feature type="chain" id="PRO_5004287637" description="PE-PGRS family protein PE_PGRS11">
    <location>
        <begin position="1"/>
        <end position="584"/>
    </location>
</feature>
<feature type="domain" description="PE" evidence="2">
    <location>
        <begin position="1"/>
        <end position="92"/>
    </location>
</feature>
<feature type="region of interest" description="Phosphoglycerate mutase" evidence="5">
    <location>
        <begin position="384"/>
        <end position="584"/>
    </location>
</feature>
<feature type="active site" description="Tele-phosphohistidine intermediate" evidence="1">
    <location>
        <position position="290"/>
    </location>
</feature>
<feature type="active site" description="Proton donor/acceptor" evidence="1">
    <location>
        <position position="365"/>
    </location>
</feature>
<feature type="mutagenesis site" description="Lack of phosphoglycerate mutase activity." evidence="4">
    <original>R</original>
    <variation>A</variation>
    <location>
        <position position="289"/>
    </location>
</feature>
<feature type="mutagenesis site" description="Lack of phosphoglycerate mutase activity." evidence="4">
    <original>H</original>
    <variation>A</variation>
    <location>
        <position position="290"/>
    </location>
</feature>
<evidence type="ECO:0000250" key="1">
    <source>
        <dbReference type="UniProtKB" id="P62707"/>
    </source>
</evidence>
<evidence type="ECO:0000255" key="2"/>
<evidence type="ECO:0000269" key="3">
    <source>
    </source>
</evidence>
<evidence type="ECO:0000269" key="4">
    <source>
    </source>
</evidence>
<evidence type="ECO:0000305" key="5"/>
<evidence type="ECO:0000312" key="6">
    <source>
        <dbReference type="EMBL" id="CCP43500.1"/>
    </source>
</evidence>
<protein>
    <recommendedName>
        <fullName evidence="5">PE-PGRS family protein PE_PGRS11</fullName>
    </recommendedName>
    <alternativeName>
        <fullName evidence="5">PE-PGRS phosphoglycerate mutase</fullName>
        <ecNumber evidence="4">5.4.2.12</ecNumber>
    </alternativeName>
</protein>
<keyword id="KW-0134">Cell wall</keyword>
<keyword id="KW-0413">Isomerase</keyword>
<keyword id="KW-0460">Magnesium</keyword>
<keyword id="KW-1185">Reference proteome</keyword>
<keyword id="KW-0964">Secreted</keyword>
<keyword id="KW-0346">Stress response</keyword>
<keyword id="KW-0843">Virulence</keyword>
<proteinExistence type="evidence at protein level"/>
<accession>Q79FW5</accession>
<accession>F2GMX9</accession>
<accession>I6X9Q9</accession>
<dbReference type="EC" id="5.4.2.12" evidence="4"/>
<dbReference type="EMBL" id="AL123456">
    <property type="protein sequence ID" value="CCP43500.1"/>
    <property type="molecule type" value="Genomic_DNA"/>
</dbReference>
<dbReference type="RefSeq" id="WP_003403850.1">
    <property type="nucleotide sequence ID" value="NZ_NVQJ01000035.1"/>
</dbReference>
<dbReference type="RefSeq" id="YP_177752.1">
    <property type="nucleotide sequence ID" value="NC_000962.3"/>
</dbReference>
<dbReference type="SMR" id="Q79FW5"/>
<dbReference type="STRING" id="83332.Rv0754"/>
<dbReference type="PaxDb" id="83332-Rv0754"/>
<dbReference type="DNASU" id="888695"/>
<dbReference type="GeneID" id="888695"/>
<dbReference type="KEGG" id="mtu:Rv0754"/>
<dbReference type="KEGG" id="mtv:RVBD_0754"/>
<dbReference type="PATRIC" id="fig|83332.111.peg.836"/>
<dbReference type="TubercuList" id="Rv0754"/>
<dbReference type="eggNOG" id="COG0406">
    <property type="taxonomic scope" value="Bacteria"/>
</dbReference>
<dbReference type="InParanoid" id="Q79FW5"/>
<dbReference type="OrthoDB" id="9793115at2"/>
<dbReference type="Proteomes" id="UP000001584">
    <property type="component" value="Chromosome"/>
</dbReference>
<dbReference type="GO" id="GO:0009986">
    <property type="term" value="C:cell surface"/>
    <property type="evidence" value="ECO:0007669"/>
    <property type="project" value="UniProtKB-SubCell"/>
</dbReference>
<dbReference type="GO" id="GO:0005737">
    <property type="term" value="C:cytoplasm"/>
    <property type="evidence" value="ECO:0000318"/>
    <property type="project" value="GO_Central"/>
</dbReference>
<dbReference type="GO" id="GO:0005576">
    <property type="term" value="C:extracellular region"/>
    <property type="evidence" value="ECO:0007669"/>
    <property type="project" value="UniProtKB-KW"/>
</dbReference>
<dbReference type="GO" id="GO:0009274">
    <property type="term" value="C:peptidoglycan-based cell wall"/>
    <property type="evidence" value="ECO:0000314"/>
    <property type="project" value="MTBBASE"/>
</dbReference>
<dbReference type="GO" id="GO:0000287">
    <property type="term" value="F:magnesium ion binding"/>
    <property type="evidence" value="ECO:0000314"/>
    <property type="project" value="MTBBASE"/>
</dbReference>
<dbReference type="GO" id="GO:0016791">
    <property type="term" value="F:phosphatase activity"/>
    <property type="evidence" value="ECO:0000318"/>
    <property type="project" value="GO_Central"/>
</dbReference>
<dbReference type="GO" id="GO:0004619">
    <property type="term" value="F:phosphoglycerate mutase activity"/>
    <property type="evidence" value="ECO:0000314"/>
    <property type="project" value="MTBBASE"/>
</dbReference>
<dbReference type="GO" id="GO:0006096">
    <property type="term" value="P:glycolytic process"/>
    <property type="evidence" value="ECO:0000314"/>
    <property type="project" value="MTBBASE"/>
</dbReference>
<dbReference type="GO" id="GO:0001666">
    <property type="term" value="P:response to hypoxia"/>
    <property type="evidence" value="ECO:0000314"/>
    <property type="project" value="MTBBASE"/>
</dbReference>
<dbReference type="Gene3D" id="1.10.287.850">
    <property type="entry name" value="HP0062-like domain"/>
    <property type="match status" value="1"/>
</dbReference>
<dbReference type="Gene3D" id="3.40.50.1240">
    <property type="entry name" value="Phosphoglycerate mutase-like"/>
    <property type="match status" value="1"/>
</dbReference>
<dbReference type="InterPro" id="IPR013078">
    <property type="entry name" value="His_Pase_superF_clade-1"/>
</dbReference>
<dbReference type="InterPro" id="IPR029033">
    <property type="entry name" value="His_PPase_superfam"/>
</dbReference>
<dbReference type="InterPro" id="IPR000084">
    <property type="entry name" value="PE-PGRS_N"/>
</dbReference>
<dbReference type="InterPro" id="IPR050275">
    <property type="entry name" value="PGM_Phosphatase"/>
</dbReference>
<dbReference type="InterPro" id="IPR048996">
    <property type="entry name" value="PGRS_rpt"/>
</dbReference>
<dbReference type="PANTHER" id="PTHR48100">
    <property type="entry name" value="BROAD-SPECIFICITY PHOSPHATASE YOR283W-RELATED"/>
    <property type="match status" value="1"/>
</dbReference>
<dbReference type="PANTHER" id="PTHR48100:SF58">
    <property type="entry name" value="PE-PGRS FAMILY PROTEIN PE_PGRS11"/>
    <property type="match status" value="1"/>
</dbReference>
<dbReference type="Pfam" id="PF00300">
    <property type="entry name" value="His_Phos_1"/>
    <property type="match status" value="1"/>
</dbReference>
<dbReference type="Pfam" id="PF00934">
    <property type="entry name" value="PE"/>
    <property type="match status" value="1"/>
</dbReference>
<dbReference type="Pfam" id="PF21526">
    <property type="entry name" value="PGRS"/>
    <property type="match status" value="1"/>
</dbReference>
<dbReference type="SMART" id="SM00855">
    <property type="entry name" value="PGAM"/>
    <property type="match status" value="1"/>
</dbReference>
<dbReference type="SUPFAM" id="SSF140459">
    <property type="entry name" value="PE/PPE dimer-like"/>
    <property type="match status" value="1"/>
</dbReference>
<dbReference type="SUPFAM" id="SSF53254">
    <property type="entry name" value="Phosphoglycerate mutase-like"/>
    <property type="match status" value="1"/>
</dbReference>
<name>PG11_MYCTU</name>
<comment type="function">
    <text evidence="3 4">Induces maturation and activation of human dendritic cells (DCs), via TLR2-dependent activation of ERK1/2, p38 MAPK, and NF-kappa-B signaling pathways, and enhances the ability of DCs to stimulate CD4(+) T cells. By activating DCs, could potentially contribute to the initiation of innate immune responses during tuberculosis infection and hence regulate the clinical course of tuberculosis (PubMed:20176745). Involved in resistance to oxidative stress, via TLR2-dependent activation of the PI3K-ERK1/2-NF-kappa-B signaling pathway and expression of COX-2 and Bcl2. Also abolishes H(2)O(2)-triggered activation of p38 MAPK (PubMed:20558725).</text>
</comment>
<comment type="catalytic activity">
    <reaction evidence="4">
        <text>(2R)-2-phosphoglycerate = (2R)-3-phosphoglycerate</text>
        <dbReference type="Rhea" id="RHEA:15901"/>
        <dbReference type="ChEBI" id="CHEBI:58272"/>
        <dbReference type="ChEBI" id="CHEBI:58289"/>
        <dbReference type="EC" id="5.4.2.12"/>
    </reaction>
</comment>
<comment type="cofactor">
    <cofactor evidence="4">
        <name>Mg(2+)</name>
        <dbReference type="ChEBI" id="CHEBI:18420"/>
    </cofactor>
</comment>
<comment type="biophysicochemical properties">
    <kinetics>
        <KM evidence="4">1.82 mM for 3-phospho-D-glycerate</KM>
    </kinetics>
    <phDependence>
        <text evidence="4">Optimum pH is 7.5. Active between pH 6 and 9.</text>
    </phDependence>
</comment>
<comment type="subunit">
    <text evidence="3 4">Interacts with human TLR2.</text>
</comment>
<comment type="subcellular location">
    <subcellularLocation>
        <location evidence="4">Secreted</location>
        <location evidence="4">Cell wall</location>
    </subcellularLocation>
    <subcellularLocation>
        <location evidence="4">Cell surface</location>
    </subcellularLocation>
</comment>
<comment type="induction">
    <text evidence="4">Up-regulated under hypoxic conditions.</text>
</comment>
<comment type="miscellaneous">
    <text evidence="4">Could be an immunodominant antigen.</text>
</comment>
<comment type="similarity">
    <text evidence="5">In the N-terminal section; belongs to the mycobacterial PE family. PGRS subfamily.</text>
</comment>
<comment type="similarity">
    <text evidence="5">In the C-terminal section; belongs to the phosphoglycerate mutase family.</text>
</comment>
<gene>
    <name evidence="6" type="primary">PE_PGRS11</name>
    <name evidence="6" type="ordered locus">Rv0754</name>
</gene>
<organism>
    <name type="scientific">Mycobacterium tuberculosis (strain ATCC 25618 / H37Rv)</name>
    <dbReference type="NCBI Taxonomy" id="83332"/>
    <lineage>
        <taxon>Bacteria</taxon>
        <taxon>Bacillati</taxon>
        <taxon>Actinomycetota</taxon>
        <taxon>Actinomycetes</taxon>
        <taxon>Mycobacteriales</taxon>
        <taxon>Mycobacteriaceae</taxon>
        <taxon>Mycobacterium</taxon>
        <taxon>Mycobacterium tuberculosis complex</taxon>
    </lineage>
</organism>
<sequence>MSFVIVARDALAAAAADLAQIGSAVNAGNLAAANPTTAVAAAAADEVSAALAALFGAHAREYQAAAAQAAAYHEQFVHRLSAAATSYAVTEVTIATSLRGALGSAPASVSDGFQAFVYGPIHATGQQWINSPVGEALAPIVNAPTNVLLGRDLIGNGVTGTAAAPNGGPGGLLFGDGGAGYTGGNGGSAGLIGNGGTGGAGFAGGVGGMGGTGGWLMGNGGMGGAGGVGGNGGAGGQALLFGNGGLGGAGGAGGVDGAIGRGGWFIGTGGMATIGGGGNGQSIVIDFVRHGQTPGNAAMLIDTAVPGPGLTALGQQQAQAIANALAAKGPYAGIFDSQLIRTQQTAAPLANLLGMAPQVLPGLNEIHAGIFEDLPQISPAGLLYLVGPIAWTLGFPIVPMLAPGSTDVNGIVFNRAFTGAVQTIYDASLANPVVAADGNITSVAYSSAFTIGVGTMMNVDNPHPLLLLTHPVPNTGAVVVQGNPEGGWTLVSWDGIPVGPASLPTALFVDVRELITAPQYAAYDIWESLFTGDPAAVINAVRDGADEVGAAVVQFPHAVADDVIDATGHPYLSGLPIGLPSLIP</sequence>